<keyword id="KW-0002">3D-structure</keyword>
<keyword id="KW-0143">Chaperone</keyword>
<keyword id="KW-0963">Cytoplasm</keyword>
<keyword id="KW-1185">Reference proteome</keyword>
<organism>
    <name type="scientific">Mycobacterium tuberculosis (strain ATCC 25618 / H37Rv)</name>
    <dbReference type="NCBI Taxonomy" id="83332"/>
    <lineage>
        <taxon>Bacteria</taxon>
        <taxon>Bacillati</taxon>
        <taxon>Actinomycetota</taxon>
        <taxon>Actinomycetes</taxon>
        <taxon>Mycobacteriales</taxon>
        <taxon>Mycobacteriaceae</taxon>
        <taxon>Mycobacterium</taxon>
        <taxon>Mycobacterium tuberculosis complex</taxon>
    </lineage>
</organism>
<protein>
    <recommendedName>
        <fullName evidence="7">ESX-5 secretion-associated protein EspG5</fullName>
    </recommendedName>
</protein>
<name>ESPG5_MYCTU</name>
<gene>
    <name evidence="6" type="primary">espG5</name>
    <name evidence="8" type="ordered locus">Rv1794</name>
</gene>
<dbReference type="EMBL" id="AL123456">
    <property type="protein sequence ID" value="CCP44560.1"/>
    <property type="molecule type" value="Genomic_DNA"/>
</dbReference>
<dbReference type="RefSeq" id="NP_216310.1">
    <property type="nucleotide sequence ID" value="NC_000962.3"/>
</dbReference>
<dbReference type="RefSeq" id="WP_003408846.1">
    <property type="nucleotide sequence ID" value="NZ_NVQJ01000037.1"/>
</dbReference>
<dbReference type="PDB" id="4KXR">
    <property type="method" value="X-ray"/>
    <property type="resolution" value="2.60 A"/>
    <property type="chains" value="C=1-300"/>
</dbReference>
<dbReference type="PDB" id="4W4L">
    <property type="method" value="X-ray"/>
    <property type="resolution" value="2.45 A"/>
    <property type="chains" value="C=1-300"/>
</dbReference>
<dbReference type="PDB" id="5XFS">
    <property type="method" value="X-ray"/>
    <property type="resolution" value="2.90 A"/>
    <property type="chains" value="C=1-300"/>
</dbReference>
<dbReference type="PDBsum" id="4KXR"/>
<dbReference type="PDBsum" id="4W4L"/>
<dbReference type="PDBsum" id="5XFS"/>
<dbReference type="SASBDB" id="O53943"/>
<dbReference type="SMR" id="O53943"/>
<dbReference type="STRING" id="83332.Rv1794"/>
<dbReference type="TCDB" id="3.A.24.4.1">
    <property type="family name" value="the type vii or esx protein secretion system (t7ss) family"/>
</dbReference>
<dbReference type="PaxDb" id="83332-Rv1794"/>
<dbReference type="DNASU" id="885881"/>
<dbReference type="GeneID" id="885881"/>
<dbReference type="KEGG" id="mtu:Rv1794"/>
<dbReference type="KEGG" id="mtv:RVBD_1794"/>
<dbReference type="PATRIC" id="fig|83332.111.peg.1999"/>
<dbReference type="TubercuList" id="Rv1794"/>
<dbReference type="eggNOG" id="ENOG5031DB5">
    <property type="taxonomic scope" value="Bacteria"/>
</dbReference>
<dbReference type="HOGENOM" id="CLU_908572_0_0_11"/>
<dbReference type="InParanoid" id="O53943"/>
<dbReference type="OrthoDB" id="4743002at2"/>
<dbReference type="EvolutionaryTrace" id="O53943"/>
<dbReference type="Proteomes" id="UP000001584">
    <property type="component" value="Chromosome"/>
</dbReference>
<dbReference type="GO" id="GO:0005737">
    <property type="term" value="C:cytoplasm"/>
    <property type="evidence" value="ECO:0007669"/>
    <property type="project" value="UniProtKB-SubCell"/>
</dbReference>
<dbReference type="GO" id="GO:0009274">
    <property type="term" value="C:peptidoglycan-based cell wall"/>
    <property type="evidence" value="ECO:0007005"/>
    <property type="project" value="MTBBASE"/>
</dbReference>
<dbReference type="GO" id="GO:0005886">
    <property type="term" value="C:plasma membrane"/>
    <property type="evidence" value="ECO:0007005"/>
    <property type="project" value="MTBBASE"/>
</dbReference>
<dbReference type="InterPro" id="IPR025734">
    <property type="entry name" value="EspG"/>
</dbReference>
<dbReference type="Pfam" id="PF14011">
    <property type="entry name" value="ESX-1_EspG"/>
    <property type="match status" value="1"/>
</dbReference>
<reference key="1">
    <citation type="journal article" date="1998" name="Nature">
        <title>Deciphering the biology of Mycobacterium tuberculosis from the complete genome sequence.</title>
        <authorList>
            <person name="Cole S.T."/>
            <person name="Brosch R."/>
            <person name="Parkhill J."/>
            <person name="Garnier T."/>
            <person name="Churcher C.M."/>
            <person name="Harris D.E."/>
            <person name="Gordon S.V."/>
            <person name="Eiglmeier K."/>
            <person name="Gas S."/>
            <person name="Barry C.E. III"/>
            <person name="Tekaia F."/>
            <person name="Badcock K."/>
            <person name="Basham D."/>
            <person name="Brown D."/>
            <person name="Chillingworth T."/>
            <person name="Connor R."/>
            <person name="Davies R.M."/>
            <person name="Devlin K."/>
            <person name="Feltwell T."/>
            <person name="Gentles S."/>
            <person name="Hamlin N."/>
            <person name="Holroyd S."/>
            <person name="Hornsby T."/>
            <person name="Jagels K."/>
            <person name="Krogh A."/>
            <person name="McLean J."/>
            <person name="Moule S."/>
            <person name="Murphy L.D."/>
            <person name="Oliver S."/>
            <person name="Osborne J."/>
            <person name="Quail M.A."/>
            <person name="Rajandream M.A."/>
            <person name="Rogers J."/>
            <person name="Rutter S."/>
            <person name="Seeger K."/>
            <person name="Skelton S."/>
            <person name="Squares S."/>
            <person name="Squares R."/>
            <person name="Sulston J.E."/>
            <person name="Taylor K."/>
            <person name="Whitehead S."/>
            <person name="Barrell B.G."/>
        </authorList>
    </citation>
    <scope>NUCLEOTIDE SEQUENCE [LARGE SCALE GENOMIC DNA]</scope>
    <source>
        <strain>ATCC 25618 / H37Rv</strain>
    </source>
</reference>
<reference key="2">
    <citation type="journal article" date="2011" name="Mol. Cell. Proteomics">
        <title>Proteogenomic analysis of Mycobacterium tuberculosis by high resolution mass spectrometry.</title>
        <authorList>
            <person name="Kelkar D.S."/>
            <person name="Kumar D."/>
            <person name="Kumar P."/>
            <person name="Balakrishnan L."/>
            <person name="Muthusamy B."/>
            <person name="Yadav A.K."/>
            <person name="Shrivastava P."/>
            <person name="Marimuthu A."/>
            <person name="Anand S."/>
            <person name="Sundaram H."/>
            <person name="Kingsbury R."/>
            <person name="Harsha H.C."/>
            <person name="Nair B."/>
            <person name="Prasad T.S."/>
            <person name="Chauhan D.S."/>
            <person name="Katoch K."/>
            <person name="Katoch V.M."/>
            <person name="Kumar P."/>
            <person name="Chaerkady R."/>
            <person name="Ramachandran S."/>
            <person name="Dash D."/>
            <person name="Pandey A."/>
        </authorList>
    </citation>
    <scope>IDENTIFICATION BY MASS SPECTROMETRY [LARGE SCALE ANALYSIS]</scope>
    <source>
        <strain>ATCC 25618 / H37Rv</strain>
    </source>
</reference>
<reference key="3">
    <citation type="journal article" date="2012" name="Mol. Microbiol.">
        <title>Disruption of the ESX-5 system of Mycobacterium tuberculosis causes loss of PPE protein secretion, reduction of cell wall integrity and strong attenuation.</title>
        <authorList>
            <person name="Bottai D."/>
            <person name="Di Luca M."/>
            <person name="Majlessi L."/>
            <person name="Frigui W."/>
            <person name="Simeone R."/>
            <person name="Sayes F."/>
            <person name="Bitter W."/>
            <person name="Brennan M.J."/>
            <person name="Leclerc C."/>
            <person name="Batoni G."/>
            <person name="Campa M."/>
            <person name="Brosch R."/>
            <person name="Esin S."/>
        </authorList>
    </citation>
    <scope>DISRUPTION PHENOTYPE</scope>
    <source>
        <strain>H37Rv</strain>
    </source>
</reference>
<reference evidence="9" key="4">
    <citation type="journal article" date="2014" name="Mol. Microbiol.">
        <title>Structure of the Mycobacterium tuberculosis type VII secretion system chaperone EspG5 in complex with PE25-PPE41 dimer.</title>
        <authorList>
            <person name="Korotkova N."/>
            <person name="Freire D."/>
            <person name="Phan T.H."/>
            <person name="Ummels R."/>
            <person name="Creekmore C.C."/>
            <person name="Evans T.J."/>
            <person name="Wilmanns M."/>
            <person name="Bitter W."/>
            <person name="Parret A.H."/>
            <person name="Houben E.N."/>
            <person name="Korotkov K.V."/>
        </authorList>
    </citation>
    <scope>X-RAY CRYSTALLOGRAPHY (2.60 ANGSTROMS) IN COMPLEX WITH PE25 AND PPE41</scope>
    <scope>FUNCTION</scope>
    <scope>SUBUNIT</scope>
</reference>
<reference evidence="10" key="5">
    <citation type="journal article" date="2014" name="Proc. Natl. Acad. Sci. U.S.A.">
        <title>Structure of a PE-PPE-EspG complex from Mycobacterium tuberculosis reveals molecular specificity of ESX protein secretion.</title>
        <authorList>
            <person name="Ekiert D.C."/>
            <person name="Cox J.S."/>
        </authorList>
    </citation>
    <scope>X-RAY CRYSTALLOGRAPHY (2.85 ANGSTROMS) IN COMPLEX WITH PE25 AND PPE41</scope>
    <source>
        <strain>ATCC 35801 / TMC 107 / Erdman</strain>
    </source>
</reference>
<reference evidence="11" key="6">
    <citation type="journal article" date="2017" name="J. Biol. Chem.">
        <title>Structural basis of the PE-PPE protein interaction in Mycobacterium tuberculosis.</title>
        <authorList>
            <person name="Chen X."/>
            <person name="Cheng H.F."/>
            <person name="Zhou J."/>
            <person name="Chan C.Y."/>
            <person name="Lau K.F."/>
            <person name="Tsui S.K."/>
            <person name="Au S.W."/>
        </authorList>
    </citation>
    <scope>X-RAY CRYSTALLOGRAPHY (2.90 ANGSTROMS) IN COMPLEX WITH PE8 AND PPE15</scope>
    <source>
        <strain>H37Rv</strain>
    </source>
</reference>
<comment type="function">
    <text evidence="3">Specific chaperone for cognate PE/PPE proteins. Plays an important role in preventing aggregation of PE/PPE dimers.</text>
</comment>
<comment type="subunit">
    <text evidence="3 4 5">Interacts specifically with ESX-5-dependent PE/PPE proteins (PubMed:25155747, PubMed:25275011, PubMed:28842489). Forms a 1:1:1 heterotrimeric complex with the PE25/PPE41 dimer, via PPE41 (PubMed:25155747, PubMed:25275011). Binding of EspG5 does not cause conformational changes in the PE25/PPE41 dimer (PubMed:25155747, PubMed:25275011). Forms a 1:1:1 heterotrimeric complex with the PE8/PPE15 dimer, via PPE15 (PubMed:28842489).</text>
</comment>
<comment type="subcellular location">
    <subcellularLocation>
        <location evidence="1">Cytoplasm</location>
    </subcellularLocation>
</comment>
<comment type="disruption phenotype">
    <text evidence="2">Deletion does not affect EsxN and PPE41 secretion.</text>
</comment>
<comment type="similarity">
    <text evidence="7">Belongs to the EspG family.</text>
</comment>
<evidence type="ECO:0000250" key="1">
    <source>
        <dbReference type="UniProtKB" id="B2HSU5"/>
    </source>
</evidence>
<evidence type="ECO:0000269" key="2">
    <source>
    </source>
</evidence>
<evidence type="ECO:0000269" key="3">
    <source>
    </source>
</evidence>
<evidence type="ECO:0000269" key="4">
    <source>
    </source>
</evidence>
<evidence type="ECO:0000269" key="5">
    <source>
    </source>
</evidence>
<evidence type="ECO:0000303" key="6">
    <source>
    </source>
</evidence>
<evidence type="ECO:0000305" key="7"/>
<evidence type="ECO:0000312" key="8">
    <source>
        <dbReference type="EMBL" id="CCP44560.1"/>
    </source>
</evidence>
<evidence type="ECO:0007744" key="9">
    <source>
        <dbReference type="PDB" id="4KXR"/>
    </source>
</evidence>
<evidence type="ECO:0007744" key="10">
    <source>
        <dbReference type="PDB" id="4W4L"/>
    </source>
</evidence>
<evidence type="ECO:0007744" key="11">
    <source>
        <dbReference type="PDB" id="5XFS"/>
    </source>
</evidence>
<evidence type="ECO:0007829" key="12">
    <source>
        <dbReference type="PDB" id="4KXR"/>
    </source>
</evidence>
<evidence type="ECO:0007829" key="13">
    <source>
        <dbReference type="PDB" id="5XFS"/>
    </source>
</evidence>
<feature type="chain" id="PRO_0000435131" description="ESX-5 secretion-associated protein EspG5">
    <location>
        <begin position="1"/>
        <end position="300"/>
    </location>
</feature>
<feature type="strand" evidence="12">
    <location>
        <begin position="10"/>
        <end position="13"/>
    </location>
</feature>
<feature type="helix" evidence="12">
    <location>
        <begin position="14"/>
        <end position="24"/>
    </location>
</feature>
<feature type="helix" evidence="12">
    <location>
        <begin position="31"/>
        <end position="33"/>
    </location>
</feature>
<feature type="helix" evidence="12">
    <location>
        <begin position="53"/>
        <end position="58"/>
    </location>
</feature>
<feature type="strand" evidence="12">
    <location>
        <begin position="61"/>
        <end position="63"/>
    </location>
</feature>
<feature type="helix" evidence="12">
    <location>
        <begin position="69"/>
        <end position="79"/>
    </location>
</feature>
<feature type="strand" evidence="12">
    <location>
        <begin position="82"/>
        <end position="93"/>
    </location>
</feature>
<feature type="strand" evidence="12">
    <location>
        <begin position="115"/>
        <end position="123"/>
    </location>
</feature>
<feature type="strand" evidence="12">
    <location>
        <begin position="126"/>
        <end position="133"/>
    </location>
</feature>
<feature type="strand" evidence="12">
    <location>
        <begin position="136"/>
        <end position="141"/>
    </location>
</feature>
<feature type="helix" evidence="12">
    <location>
        <begin position="147"/>
        <end position="161"/>
    </location>
</feature>
<feature type="strand" evidence="12">
    <location>
        <begin position="172"/>
        <end position="175"/>
    </location>
</feature>
<feature type="helix" evidence="12">
    <location>
        <begin position="176"/>
        <end position="188"/>
    </location>
</feature>
<feature type="turn" evidence="12">
    <location>
        <begin position="189"/>
        <end position="191"/>
    </location>
</feature>
<feature type="helix" evidence="12">
    <location>
        <begin position="193"/>
        <end position="195"/>
    </location>
</feature>
<feature type="helix" evidence="12">
    <location>
        <begin position="197"/>
        <end position="201"/>
    </location>
</feature>
<feature type="helix" evidence="12">
    <location>
        <begin position="206"/>
        <end position="217"/>
    </location>
</feature>
<feature type="strand" evidence="12">
    <location>
        <begin position="220"/>
        <end position="231"/>
    </location>
</feature>
<feature type="strand" evidence="12">
    <location>
        <begin position="234"/>
        <end position="237"/>
    </location>
</feature>
<feature type="strand" evidence="12">
    <location>
        <begin position="242"/>
        <end position="247"/>
    </location>
</feature>
<feature type="strand" evidence="12">
    <location>
        <begin position="250"/>
        <end position="256"/>
    </location>
</feature>
<feature type="strand" evidence="12">
    <location>
        <begin position="267"/>
        <end position="272"/>
    </location>
</feature>
<feature type="helix" evidence="12">
    <location>
        <begin position="275"/>
        <end position="287"/>
    </location>
</feature>
<feature type="strand" evidence="13">
    <location>
        <begin position="294"/>
        <end position="296"/>
    </location>
</feature>
<sequence>MDQQSTRTDITVNVDGFWMLQALLDIRHVAPELRCRPYVSTDSNDWLNEHPGMAVMREQGIVVNDAVNEQVAARMKVLAAPDLEVVALLSRGKLLYGVIDDENQPPGSRDIPDNEFRVVLARRGQHWVSAVRVGNDITVDDVTVSDSASIAALVMDGLESIHHADPAAINAVNVPMEEMLEATKSWQESGFNVFSGGDLRRMGISAATVAALGQALSDPAAEVAVYARQYRDDAKGPSASVLSLKDGSGGRIALYQQARTAGSGEAWLAICPATPQLVQVGVKTVLDTLPYGEWKTHSRV</sequence>
<accession>O53943</accession>
<accession>F2GIW9</accession>
<accession>I6XZ10</accession>
<accession>Q7D7Y5</accession>
<proteinExistence type="evidence at protein level"/>